<proteinExistence type="evidence at protein level"/>
<gene>
    <name type="primary">RRP7</name>
    <name type="ordered locus">YCL031C</name>
    <name type="ORF">YCL184</name>
    <name type="ORF">YCL31C</name>
</gene>
<protein>
    <recommendedName>
        <fullName>Ribosomal RNA-processing protein 7</fullName>
    </recommendedName>
</protein>
<reference key="1">
    <citation type="journal article" date="1991" name="Yeast">
        <title>The complete sequence of a 11,953 bp fragment from C1G on chromosome III encompasses four new open reading frames.</title>
        <authorList>
            <person name="Rad M.R."/>
            <person name="Luetzenkirchen K."/>
            <person name="Xu G."/>
            <person name="Kleinhans U."/>
            <person name="Hollenberg C.P."/>
        </authorList>
    </citation>
    <scope>NUCLEOTIDE SEQUENCE [GENOMIC DNA]</scope>
</reference>
<reference key="2">
    <citation type="journal article" date="1992" name="Nature">
        <title>The complete DNA sequence of yeast chromosome III.</title>
        <authorList>
            <person name="Oliver S.G."/>
            <person name="van der Aart Q.J.M."/>
            <person name="Agostoni-Carbone M.L."/>
            <person name="Aigle M."/>
            <person name="Alberghina L."/>
            <person name="Alexandraki D."/>
            <person name="Antoine G."/>
            <person name="Anwar R."/>
            <person name="Ballesta J.P.G."/>
            <person name="Benit P."/>
            <person name="Berben G."/>
            <person name="Bergantino E."/>
            <person name="Biteau N."/>
            <person name="Bolle P.-A."/>
            <person name="Bolotin-Fukuhara M."/>
            <person name="Brown A."/>
            <person name="Brown A.J.P."/>
            <person name="Buhler J.-M."/>
            <person name="Carcano C."/>
            <person name="Carignani G."/>
            <person name="Cederberg H."/>
            <person name="Chanet R."/>
            <person name="Contreras R."/>
            <person name="Crouzet M."/>
            <person name="Daignan-Fornier B."/>
            <person name="Defoor E."/>
            <person name="Delgado M.D."/>
            <person name="Demolder J."/>
            <person name="Doira C."/>
            <person name="Dubois E."/>
            <person name="Dujon B."/>
            <person name="Duesterhoeft A."/>
            <person name="Erdmann D."/>
            <person name="Esteban M."/>
            <person name="Fabre F."/>
            <person name="Fairhead C."/>
            <person name="Faye G."/>
            <person name="Feldmann H."/>
            <person name="Fiers W."/>
            <person name="Francingues-Gaillard M.-C."/>
            <person name="Franco L."/>
            <person name="Frontali L."/>
            <person name="Fukuhara H."/>
            <person name="Fuller L.J."/>
            <person name="Galland P."/>
            <person name="Gent M.E."/>
            <person name="Gigot D."/>
            <person name="Gilliquet V."/>
            <person name="Glansdorff N."/>
            <person name="Goffeau A."/>
            <person name="Grenson M."/>
            <person name="Grisanti P."/>
            <person name="Grivell L.A."/>
            <person name="de Haan M."/>
            <person name="Haasemann M."/>
            <person name="Hatat D."/>
            <person name="Hoenicka J."/>
            <person name="Hegemann J.H."/>
            <person name="Herbert C.J."/>
            <person name="Hilger F."/>
            <person name="Hohmann S."/>
            <person name="Hollenberg C.P."/>
            <person name="Huse K."/>
            <person name="Iborra F."/>
            <person name="Indge K.J."/>
            <person name="Isono K."/>
            <person name="Jacq C."/>
            <person name="Jacquet M."/>
            <person name="James C.M."/>
            <person name="Jauniaux J.-C."/>
            <person name="Jia Y."/>
            <person name="Jimenez A."/>
            <person name="Kelly A."/>
            <person name="Kleinhans U."/>
            <person name="Kreisl P."/>
            <person name="Lanfranchi G."/>
            <person name="Lewis C."/>
            <person name="van der Linden C.G."/>
            <person name="Lucchini G."/>
            <person name="Lutzenkirchen K."/>
            <person name="Maat M.J."/>
            <person name="Mallet L."/>
            <person name="Mannhaupt G."/>
            <person name="Martegani E."/>
            <person name="Mathieu A."/>
            <person name="Maurer C.T.C."/>
            <person name="McConnell D."/>
            <person name="McKee R.A."/>
            <person name="Messenguy F."/>
            <person name="Mewes H.-W."/>
            <person name="Molemans F."/>
            <person name="Montague M.A."/>
            <person name="Muzi Falconi M."/>
            <person name="Navas L."/>
            <person name="Newlon C.S."/>
            <person name="Noone D."/>
            <person name="Pallier C."/>
            <person name="Panzeri L."/>
            <person name="Pearson B.M."/>
            <person name="Perea J."/>
            <person name="Philippsen P."/>
            <person name="Pierard A."/>
            <person name="Planta R.J."/>
            <person name="Plevani P."/>
            <person name="Poetsch B."/>
            <person name="Pohl F.M."/>
            <person name="Purnelle B."/>
            <person name="Ramezani Rad M."/>
            <person name="Rasmussen S.W."/>
            <person name="Raynal A."/>
            <person name="Remacha M.A."/>
            <person name="Richterich P."/>
            <person name="Roberts A.B."/>
            <person name="Rodriguez F."/>
            <person name="Sanz E."/>
            <person name="Schaaff-Gerstenschlaeger I."/>
            <person name="Scherens B."/>
            <person name="Schweitzer B."/>
            <person name="Shu Y."/>
            <person name="Skala J."/>
            <person name="Slonimski P.P."/>
            <person name="Sor F."/>
            <person name="Soustelle C."/>
            <person name="Spiegelberg R."/>
            <person name="Stateva L.I."/>
            <person name="Steensma H.Y."/>
            <person name="Steiner S."/>
            <person name="Thierry A."/>
            <person name="Thireos G."/>
            <person name="Tzermia M."/>
            <person name="Urrestarazu L.A."/>
            <person name="Valle G."/>
            <person name="Vetter I."/>
            <person name="van Vliet-Reedijk J.C."/>
            <person name="Voet M."/>
            <person name="Volckaert G."/>
            <person name="Vreken P."/>
            <person name="Wang H."/>
            <person name="Warmington J.R."/>
            <person name="von Wettstein D."/>
            <person name="Wicksteed B.L."/>
            <person name="Wilson C."/>
            <person name="Wurst H."/>
            <person name="Xu G."/>
            <person name="Yoshikawa A."/>
            <person name="Zimmermann F.K."/>
            <person name="Sgouros J.G."/>
        </authorList>
    </citation>
    <scope>NUCLEOTIDE SEQUENCE [LARGE SCALE GENOMIC DNA]</scope>
    <source>
        <strain>ATCC 204508 / S288c</strain>
    </source>
</reference>
<reference key="3">
    <citation type="journal article" date="2014" name="G3 (Bethesda)">
        <title>The reference genome sequence of Saccharomyces cerevisiae: Then and now.</title>
        <authorList>
            <person name="Engel S.R."/>
            <person name="Dietrich F.S."/>
            <person name="Fisk D.G."/>
            <person name="Binkley G."/>
            <person name="Balakrishnan R."/>
            <person name="Costanzo M.C."/>
            <person name="Dwight S.S."/>
            <person name="Hitz B.C."/>
            <person name="Karra K."/>
            <person name="Nash R.S."/>
            <person name="Weng S."/>
            <person name="Wong E.D."/>
            <person name="Lloyd P."/>
            <person name="Skrzypek M.S."/>
            <person name="Miyasato S.R."/>
            <person name="Simison M."/>
            <person name="Cherry J.M."/>
        </authorList>
    </citation>
    <scope>GENOME REANNOTATION</scope>
    <source>
        <strain>ATCC 204508 / S288c</strain>
    </source>
</reference>
<reference key="4">
    <citation type="journal article" date="1982" name="Gene">
        <title>The nucleotide sequence of the HIS4 region of yeast.</title>
        <authorList>
            <person name="Donahue T.F."/>
            <person name="Farabaugh P.J."/>
            <person name="Fink G.R."/>
        </authorList>
    </citation>
    <scope>NUCLEOTIDE SEQUENCE [GENOMIC DNA] OF 1-218</scope>
</reference>
<reference key="5">
    <citation type="journal article" date="1997" name="Mol. Cell. Biol.">
        <title>Functional analysis of Rrp7p, an essential yeast protein involved in pre-rRNA processing and ribosome assembly.</title>
        <authorList>
            <person name="Baudin-Baillieu A."/>
            <person name="Tollervey D."/>
            <person name="Cullin C."/>
            <person name="Lacroute F."/>
        </authorList>
    </citation>
    <scope>CHARACTERIZATION</scope>
</reference>
<reference key="6">
    <citation type="journal article" date="2003" name="Nature">
        <title>Global analysis of protein localization in budding yeast.</title>
        <authorList>
            <person name="Huh W.-K."/>
            <person name="Falvo J.V."/>
            <person name="Gerke L.C."/>
            <person name="Carroll A.S."/>
            <person name="Howson R.W."/>
            <person name="Weissman J.S."/>
            <person name="O'Shea E.K."/>
        </authorList>
    </citation>
    <scope>SUBCELLULAR LOCATION [LARGE SCALE ANALYSIS]</scope>
</reference>
<reference key="7">
    <citation type="journal article" date="2003" name="Nature">
        <title>Global analysis of protein expression in yeast.</title>
        <authorList>
            <person name="Ghaemmaghami S."/>
            <person name="Huh W.-K."/>
            <person name="Bower K."/>
            <person name="Howson R.W."/>
            <person name="Belle A."/>
            <person name="Dephoure N."/>
            <person name="O'Shea E.K."/>
            <person name="Weissman J.S."/>
        </authorList>
    </citation>
    <scope>LEVEL OF PROTEIN EXPRESSION [LARGE SCALE ANALYSIS]</scope>
</reference>
<reference key="8">
    <citation type="journal article" date="2007" name="Mol. Cell. Biol.">
        <title>The 90S preribosome is a multimodular structure that is assembled through a hierarchical mechanism.</title>
        <authorList>
            <person name="Perez-Fernandez J."/>
            <person name="Roman A."/>
            <person name="De Las Rivas J."/>
            <person name="Bustelo X.R."/>
            <person name="Dosil M."/>
        </authorList>
    </citation>
    <scope>IDENTIFICATION IN THE 90S PRE-RIBOSOMAL PARTICLE</scope>
</reference>
<accession>P25368</accession>
<accession>D6VQY4</accession>
<comment type="function">
    <text>Plays an important role in the synthesis of 18S rRNA but is not required for the 5.8S and 25S pathway. Is necessary for the cleavage at site A2. Is required for efficient association of RPS27 with the pre-ribosomal particle.</text>
</comment>
<comment type="subunit">
    <text evidence="3">Component of the 90S pre-ribosomal particle.</text>
</comment>
<comment type="interaction">
    <interactant intactId="EBI-16019">
        <id>P25368</id>
    </interactant>
    <interactant intactId="EBI-9533">
        <id>P15790</id>
        <label>CKA1</label>
    </interactant>
    <organismsDiffer>false</organismsDiffer>
    <experiments>4</experiments>
</comment>
<comment type="interaction">
    <interactant intactId="EBI-16019">
        <id>P25368</id>
    </interactant>
    <interactant intactId="EBI-17313">
        <id>P32790</id>
        <label>SLA1</label>
    </interactant>
    <organismsDiffer>false</organismsDiffer>
    <experiments>3</experiments>
</comment>
<comment type="interaction">
    <interactant intactId="EBI-16019">
        <id>P25368</id>
    </interactant>
    <interactant intactId="EBI-1878">
        <id>P53254</id>
        <label>UTP22</label>
    </interactant>
    <organismsDiffer>false</organismsDiffer>
    <experiments>8</experiments>
</comment>
<comment type="subcellular location">
    <subcellularLocation>
        <location evidence="1">Nucleus</location>
        <location evidence="1">Nucleolus</location>
    </subcellularLocation>
</comment>
<comment type="miscellaneous">
    <text evidence="2">Present with 2610 molecules/cell in log phase SD medium.</text>
</comment>
<comment type="similarity">
    <text evidence="4">Belongs to the RRP7 family.</text>
</comment>
<name>RRP7_YEAST</name>
<evidence type="ECO:0000269" key="1">
    <source>
    </source>
</evidence>
<evidence type="ECO:0000269" key="2">
    <source>
    </source>
</evidence>
<evidence type="ECO:0000269" key="3">
    <source>
    </source>
</evidence>
<evidence type="ECO:0000305" key="4"/>
<evidence type="ECO:0007829" key="5">
    <source>
        <dbReference type="PDB" id="2MBY"/>
    </source>
</evidence>
<evidence type="ECO:0007829" key="6">
    <source>
        <dbReference type="PDB" id="4M5D"/>
    </source>
</evidence>
<keyword id="KW-0002">3D-structure</keyword>
<keyword id="KW-0539">Nucleus</keyword>
<keyword id="KW-1185">Reference proteome</keyword>
<keyword id="KW-0690">Ribosome biogenesis</keyword>
<keyword id="KW-0698">rRNA processing</keyword>
<sequence>MGIEDISAMKNGFIVVPFKLPDHKALPKSQEASLHFMFAKRHQSSNSNESDCLFLVNLPLLSNIEHMKKFVGQLCGKYDTVSHVEELLYNDEFGLHEVDLSALTSDLMSSTDVNEKRYTPRNTALLKFVDAASINNCWNALKKYSNLHAKHPNELFEWTYTTPSFTTFVNFYKPLDIDYLKEDIHTHMAIFEQREAQAQEDVQSSIVDEDGFTLVVGKNTKSLNSIRKKILNKNPLSKHENKAKPISNIDKKAKKDFYRFQVRERKKQEINQLLSKFKEDQERIKVMKAKRKFNPYT</sequence>
<dbReference type="EMBL" id="X59720">
    <property type="protein sequence ID" value="CAA42385.1"/>
    <property type="molecule type" value="Genomic_DNA"/>
</dbReference>
<dbReference type="EMBL" id="V01310">
    <property type="status" value="NOT_ANNOTATED_CDS"/>
    <property type="molecule type" value="Genomic_DNA"/>
</dbReference>
<dbReference type="EMBL" id="BK006937">
    <property type="protein sequence ID" value="DAA07453.1"/>
    <property type="molecule type" value="Genomic_DNA"/>
</dbReference>
<dbReference type="PIR" id="S17474">
    <property type="entry name" value="S17474"/>
</dbReference>
<dbReference type="RefSeq" id="NP_009899.1">
    <property type="nucleotide sequence ID" value="NM_001178676.1"/>
</dbReference>
<dbReference type="PDB" id="2MBY">
    <property type="method" value="NMR"/>
    <property type="chains" value="A=256-297"/>
</dbReference>
<dbReference type="PDB" id="4M5D">
    <property type="method" value="X-ray"/>
    <property type="resolution" value="1.97 A"/>
    <property type="chains" value="B=1-297"/>
</dbReference>
<dbReference type="PDB" id="5WLC">
    <property type="method" value="EM"/>
    <property type="resolution" value="3.80 A"/>
    <property type="chains" value="NI=1-297"/>
</dbReference>
<dbReference type="PDB" id="5WYJ">
    <property type="method" value="EM"/>
    <property type="resolution" value="8.70 A"/>
    <property type="chains" value="CA=1-297"/>
</dbReference>
<dbReference type="PDB" id="5WYK">
    <property type="method" value="EM"/>
    <property type="resolution" value="4.50 A"/>
    <property type="chains" value="CA=1-297"/>
</dbReference>
<dbReference type="PDB" id="6KE6">
    <property type="method" value="EM"/>
    <property type="resolution" value="3.40 A"/>
    <property type="chains" value="RF=1-297"/>
</dbReference>
<dbReference type="PDB" id="6LQP">
    <property type="method" value="EM"/>
    <property type="resolution" value="3.20 A"/>
    <property type="chains" value="RF=1-297"/>
</dbReference>
<dbReference type="PDB" id="6LQQ">
    <property type="method" value="EM"/>
    <property type="resolution" value="4.10 A"/>
    <property type="chains" value="RF=1-297"/>
</dbReference>
<dbReference type="PDB" id="6LQR">
    <property type="method" value="EM"/>
    <property type="resolution" value="8.60 A"/>
    <property type="chains" value="RF=1-297"/>
</dbReference>
<dbReference type="PDB" id="6LQS">
    <property type="method" value="EM"/>
    <property type="resolution" value="3.80 A"/>
    <property type="chains" value="RF=1-297"/>
</dbReference>
<dbReference type="PDB" id="6LQT">
    <property type="method" value="EM"/>
    <property type="resolution" value="4.90 A"/>
    <property type="chains" value="RF=1-297"/>
</dbReference>
<dbReference type="PDB" id="6LQU">
    <property type="method" value="EM"/>
    <property type="resolution" value="3.70 A"/>
    <property type="chains" value="RF=1-297"/>
</dbReference>
<dbReference type="PDB" id="6ZQA">
    <property type="method" value="EM"/>
    <property type="resolution" value="4.40 A"/>
    <property type="chains" value="CN=1-297"/>
</dbReference>
<dbReference type="PDB" id="6ZQB">
    <property type="method" value="EM"/>
    <property type="resolution" value="3.90 A"/>
    <property type="chains" value="CN=1-297"/>
</dbReference>
<dbReference type="PDB" id="6ZQC">
    <property type="method" value="EM"/>
    <property type="resolution" value="3.80 A"/>
    <property type="chains" value="CN=1-297"/>
</dbReference>
<dbReference type="PDB" id="6ZQD">
    <property type="method" value="EM"/>
    <property type="resolution" value="3.80 A"/>
    <property type="chains" value="CN=1-297"/>
</dbReference>
<dbReference type="PDB" id="6ZQE">
    <property type="method" value="EM"/>
    <property type="resolution" value="7.10 A"/>
    <property type="chains" value="CN=1-297"/>
</dbReference>
<dbReference type="PDB" id="6ZQF">
    <property type="method" value="EM"/>
    <property type="resolution" value="4.90 A"/>
    <property type="chains" value="CN=1-297"/>
</dbReference>
<dbReference type="PDB" id="7AJT">
    <property type="method" value="EM"/>
    <property type="resolution" value="4.60 A"/>
    <property type="chains" value="CN=1-297"/>
</dbReference>
<dbReference type="PDB" id="7AJU">
    <property type="method" value="EM"/>
    <property type="resolution" value="3.80 A"/>
    <property type="chains" value="CN=1-297"/>
</dbReference>
<dbReference type="PDB" id="7D4I">
    <property type="method" value="EM"/>
    <property type="resolution" value="4.00 A"/>
    <property type="chains" value="RF=1-297"/>
</dbReference>
<dbReference type="PDB" id="7D5S">
    <property type="method" value="EM"/>
    <property type="resolution" value="4.60 A"/>
    <property type="chains" value="RF=1-297"/>
</dbReference>
<dbReference type="PDB" id="7D5T">
    <property type="method" value="EM"/>
    <property type="resolution" value="6.00 A"/>
    <property type="chains" value="RF=1-297"/>
</dbReference>
<dbReference type="PDB" id="7D63">
    <property type="method" value="EM"/>
    <property type="resolution" value="12.30 A"/>
    <property type="chains" value="RF=1-297"/>
</dbReference>
<dbReference type="PDB" id="7SUK">
    <property type="method" value="EM"/>
    <property type="resolution" value="3.99 A"/>
    <property type="chains" value="NI=3-189"/>
</dbReference>
<dbReference type="PDBsum" id="2MBY"/>
<dbReference type="PDBsum" id="4M5D"/>
<dbReference type="PDBsum" id="5WLC"/>
<dbReference type="PDBsum" id="5WYJ"/>
<dbReference type="PDBsum" id="5WYK"/>
<dbReference type="PDBsum" id="6KE6"/>
<dbReference type="PDBsum" id="6LQP"/>
<dbReference type="PDBsum" id="6LQQ"/>
<dbReference type="PDBsum" id="6LQR"/>
<dbReference type="PDBsum" id="6LQS"/>
<dbReference type="PDBsum" id="6LQT"/>
<dbReference type="PDBsum" id="6LQU"/>
<dbReference type="PDBsum" id="6ZQA"/>
<dbReference type="PDBsum" id="6ZQB"/>
<dbReference type="PDBsum" id="6ZQC"/>
<dbReference type="PDBsum" id="6ZQD"/>
<dbReference type="PDBsum" id="6ZQE"/>
<dbReference type="PDBsum" id="6ZQF"/>
<dbReference type="PDBsum" id="7AJT"/>
<dbReference type="PDBsum" id="7AJU"/>
<dbReference type="PDBsum" id="7D4I"/>
<dbReference type="PDBsum" id="7D5S"/>
<dbReference type="PDBsum" id="7D5T"/>
<dbReference type="PDBsum" id="7D63"/>
<dbReference type="PDBsum" id="7SUK"/>
<dbReference type="BMRB" id="P25368"/>
<dbReference type="EMDB" id="EMD-0949"/>
<dbReference type="EMDB" id="EMD-0950"/>
<dbReference type="EMDB" id="EMD-0951"/>
<dbReference type="EMDB" id="EMD-0952"/>
<dbReference type="EMDB" id="EMD-0953"/>
<dbReference type="EMDB" id="EMD-0954"/>
<dbReference type="EMDB" id="EMD-11357"/>
<dbReference type="EMDB" id="EMD-11358"/>
<dbReference type="EMDB" id="EMD-11359"/>
<dbReference type="EMDB" id="EMD-11360"/>
<dbReference type="EMDB" id="EMD-11361"/>
<dbReference type="EMDB" id="EMD-11362"/>
<dbReference type="EMDB" id="EMD-11807"/>
<dbReference type="EMDB" id="EMD-11808"/>
<dbReference type="EMDB" id="EMD-25441"/>
<dbReference type="EMDB" id="EMD-30574"/>
<dbReference type="EMDB" id="EMD-30584"/>
<dbReference type="EMDB" id="EMD-30585"/>
<dbReference type="EMDB" id="EMD-30588"/>
<dbReference type="EMDB" id="EMD-6695"/>
<dbReference type="EMDB" id="EMD-6696"/>
<dbReference type="EMDB" id="EMD-8859"/>
<dbReference type="EMDB" id="EMD-9964"/>
<dbReference type="SMR" id="P25368"/>
<dbReference type="BioGRID" id="30952">
    <property type="interactions" value="184"/>
</dbReference>
<dbReference type="ComplexPortal" id="CPX-1604">
    <property type="entry name" value="Small ribosomal subunit processome"/>
</dbReference>
<dbReference type="ComplexPortal" id="CPX-771">
    <property type="entry name" value="UTP-C complex variant 2"/>
</dbReference>
<dbReference type="ComplexPortal" id="CPX-772">
    <property type="entry name" value="UTP-C complex variant 1"/>
</dbReference>
<dbReference type="ComplexPortal" id="CPX-773">
    <property type="entry name" value="UTP-C complex variant 3"/>
</dbReference>
<dbReference type="ComplexPortal" id="CPX-774">
    <property type="entry name" value="CURI complex variant 1"/>
</dbReference>
<dbReference type="ComplexPortal" id="CPX-775">
    <property type="entry name" value="CURI complex variant 2"/>
</dbReference>
<dbReference type="ComplexPortal" id="CPX-776">
    <property type="entry name" value="CURI complex variant 3"/>
</dbReference>
<dbReference type="DIP" id="DIP-4974N"/>
<dbReference type="FunCoup" id="P25368">
    <property type="interactions" value="327"/>
</dbReference>
<dbReference type="IntAct" id="P25368">
    <property type="interactions" value="93"/>
</dbReference>
<dbReference type="MINT" id="P25368"/>
<dbReference type="STRING" id="4932.YCL031C"/>
<dbReference type="iPTMnet" id="P25368"/>
<dbReference type="PaxDb" id="4932-YCL031C"/>
<dbReference type="PeptideAtlas" id="P25368"/>
<dbReference type="EnsemblFungi" id="YCL031C_mRNA">
    <property type="protein sequence ID" value="YCL031C"/>
    <property type="gene ID" value="YCL031C"/>
</dbReference>
<dbReference type="GeneID" id="850326"/>
<dbReference type="KEGG" id="sce:YCL031C"/>
<dbReference type="AGR" id="SGD:S000000536"/>
<dbReference type="SGD" id="S000000536">
    <property type="gene designation" value="RRP7"/>
</dbReference>
<dbReference type="VEuPathDB" id="FungiDB:YCL031C"/>
<dbReference type="eggNOG" id="KOG4008">
    <property type="taxonomic scope" value="Eukaryota"/>
</dbReference>
<dbReference type="GeneTree" id="ENSGT00390000018482"/>
<dbReference type="HOGENOM" id="CLU_053375_0_0_1"/>
<dbReference type="InParanoid" id="P25368"/>
<dbReference type="OMA" id="GIHKWIA"/>
<dbReference type="OrthoDB" id="5390at2759"/>
<dbReference type="BioCyc" id="YEAST:G3O-29291-MONOMER"/>
<dbReference type="Reactome" id="R-SCE-6791226">
    <property type="pathway name" value="Major pathway of rRNA processing in the nucleolus and cytosol"/>
</dbReference>
<dbReference type="BioGRID-ORCS" id="850326">
    <property type="hits" value="10 hits in 10 CRISPR screens"/>
</dbReference>
<dbReference type="EvolutionaryTrace" id="P25368"/>
<dbReference type="PRO" id="PR:P25368"/>
<dbReference type="Proteomes" id="UP000002311">
    <property type="component" value="Chromosome III"/>
</dbReference>
<dbReference type="RNAct" id="P25368">
    <property type="molecule type" value="protein"/>
</dbReference>
<dbReference type="GO" id="GO:0032545">
    <property type="term" value="C:CURI complex"/>
    <property type="evidence" value="ECO:0000314"/>
    <property type="project" value="SGD"/>
</dbReference>
<dbReference type="GO" id="GO:0005730">
    <property type="term" value="C:nucleolus"/>
    <property type="evidence" value="ECO:0000314"/>
    <property type="project" value="ComplexPortal"/>
</dbReference>
<dbReference type="GO" id="GO:0005654">
    <property type="term" value="C:nucleoplasm"/>
    <property type="evidence" value="ECO:0000304"/>
    <property type="project" value="Reactome"/>
</dbReference>
<dbReference type="GO" id="GO:0005634">
    <property type="term" value="C:nucleus"/>
    <property type="evidence" value="ECO:0007005"/>
    <property type="project" value="SGD"/>
</dbReference>
<dbReference type="GO" id="GO:0032040">
    <property type="term" value="C:small-subunit processome"/>
    <property type="evidence" value="ECO:0000353"/>
    <property type="project" value="ComplexPortal"/>
</dbReference>
<dbReference type="GO" id="GO:0034456">
    <property type="term" value="C:UTP-C complex"/>
    <property type="evidence" value="ECO:0000314"/>
    <property type="project" value="SGD"/>
</dbReference>
<dbReference type="GO" id="GO:0019843">
    <property type="term" value="F:rRNA binding"/>
    <property type="evidence" value="ECO:0000314"/>
    <property type="project" value="SGD"/>
</dbReference>
<dbReference type="GO" id="GO:0030490">
    <property type="term" value="P:maturation of SSU-rRNA"/>
    <property type="evidence" value="ECO:0000303"/>
    <property type="project" value="ComplexPortal"/>
</dbReference>
<dbReference type="GO" id="GO:0042790">
    <property type="term" value="P:nucleolar large rRNA transcription by RNA polymerase I"/>
    <property type="evidence" value="ECO:0000314"/>
    <property type="project" value="ComplexPortal"/>
</dbReference>
<dbReference type="GO" id="GO:0060962">
    <property type="term" value="P:regulation of ribosomal protein gene transcription by RNA polymerase II"/>
    <property type="evidence" value="ECO:0000314"/>
    <property type="project" value="ComplexPortal"/>
</dbReference>
<dbReference type="GO" id="GO:0000028">
    <property type="term" value="P:ribosomal small subunit assembly"/>
    <property type="evidence" value="ECO:0000315"/>
    <property type="project" value="SGD"/>
</dbReference>
<dbReference type="GO" id="GO:0006364">
    <property type="term" value="P:rRNA processing"/>
    <property type="evidence" value="ECO:0000315"/>
    <property type="project" value="SGD"/>
</dbReference>
<dbReference type="CDD" id="cd12293">
    <property type="entry name" value="dRRM_Rrp7p"/>
    <property type="match status" value="1"/>
</dbReference>
<dbReference type="Gene3D" id="6.10.250.1770">
    <property type="match status" value="1"/>
</dbReference>
<dbReference type="Gene3D" id="6.10.250.2760">
    <property type="match status" value="1"/>
</dbReference>
<dbReference type="InterPro" id="IPR040447">
    <property type="entry name" value="RRM_Rrp7"/>
</dbReference>
<dbReference type="InterPro" id="IPR040446">
    <property type="entry name" value="RRP7"/>
</dbReference>
<dbReference type="InterPro" id="IPR024326">
    <property type="entry name" value="RRP7_C"/>
</dbReference>
<dbReference type="PANTHER" id="PTHR13191">
    <property type="entry name" value="RIBOSOMAL RNA PROCESSING PROTEIN 7-RELATED"/>
    <property type="match status" value="1"/>
</dbReference>
<dbReference type="PANTHER" id="PTHR13191:SF0">
    <property type="entry name" value="RIBOSOMAL RNA-PROCESSING PROTEIN 7 HOMOLOG A-RELATED"/>
    <property type="match status" value="1"/>
</dbReference>
<dbReference type="Pfam" id="PF17799">
    <property type="entry name" value="RRM_Rrp7"/>
    <property type="match status" value="1"/>
</dbReference>
<dbReference type="Pfam" id="PF12923">
    <property type="entry name" value="RRP7"/>
    <property type="match status" value="1"/>
</dbReference>
<organism>
    <name type="scientific">Saccharomyces cerevisiae (strain ATCC 204508 / S288c)</name>
    <name type="common">Baker's yeast</name>
    <dbReference type="NCBI Taxonomy" id="559292"/>
    <lineage>
        <taxon>Eukaryota</taxon>
        <taxon>Fungi</taxon>
        <taxon>Dikarya</taxon>
        <taxon>Ascomycota</taxon>
        <taxon>Saccharomycotina</taxon>
        <taxon>Saccharomycetes</taxon>
        <taxon>Saccharomycetales</taxon>
        <taxon>Saccharomycetaceae</taxon>
        <taxon>Saccharomyces</taxon>
    </lineage>
</organism>
<feature type="chain" id="PRO_0000097457" description="Ribosomal RNA-processing protein 7">
    <location>
        <begin position="1"/>
        <end position="297"/>
    </location>
</feature>
<feature type="sequence conflict" description="In Ref. 4; V01310." evidence="4" ref="4">
    <original>H</original>
    <variation>R</variation>
    <location>
        <position position="66"/>
    </location>
</feature>
<feature type="strand" evidence="6">
    <location>
        <begin position="14"/>
        <end position="19"/>
    </location>
</feature>
<feature type="strand" evidence="6">
    <location>
        <begin position="34"/>
        <end position="41"/>
    </location>
</feature>
<feature type="helix" evidence="6">
    <location>
        <begin position="47"/>
        <end position="49"/>
    </location>
</feature>
<feature type="strand" evidence="6">
    <location>
        <begin position="51"/>
        <end position="57"/>
    </location>
</feature>
<feature type="helix" evidence="6">
    <location>
        <begin position="64"/>
        <end position="77"/>
    </location>
</feature>
<feature type="strand" evidence="6">
    <location>
        <begin position="84"/>
        <end position="88"/>
    </location>
</feature>
<feature type="helix" evidence="6">
    <location>
        <begin position="100"/>
        <end position="104"/>
    </location>
</feature>
<feature type="strand" evidence="6">
    <location>
        <begin position="123"/>
        <end position="130"/>
    </location>
</feature>
<feature type="helix" evidence="6">
    <location>
        <begin position="131"/>
        <end position="144"/>
    </location>
</feature>
<feature type="helix" evidence="6">
    <location>
        <begin position="147"/>
        <end position="150"/>
    </location>
</feature>
<feature type="helix" evidence="6">
    <location>
        <begin position="152"/>
        <end position="154"/>
    </location>
</feature>
<feature type="helix" evidence="6">
    <location>
        <begin position="165"/>
        <end position="170"/>
    </location>
</feature>
<feature type="helix" evidence="6">
    <location>
        <begin position="177"/>
        <end position="188"/>
    </location>
</feature>
<feature type="helix" evidence="5">
    <location>
        <begin position="256"/>
        <end position="265"/>
    </location>
</feature>
<feature type="helix" evidence="5">
    <location>
        <begin position="269"/>
        <end position="288"/>
    </location>
</feature>